<feature type="chain" id="PRO_0000380111" description="Sorting nexin-14">
    <location>
        <begin position="1"/>
        <end position="894"/>
    </location>
</feature>
<feature type="domain" description="PXA" evidence="4 6">
    <location>
        <begin position="78"/>
        <end position="252"/>
    </location>
</feature>
<feature type="domain" description="RGS" evidence="5">
    <location>
        <begin position="284"/>
        <end position="416"/>
    </location>
</feature>
<feature type="domain" description="PX" evidence="4">
    <location>
        <begin position="518"/>
        <end position="638"/>
    </location>
</feature>
<feature type="modified residue" description="Phosphoserine" evidence="3">
    <location>
        <position position="496"/>
    </location>
</feature>
<dbReference type="EMBL" id="CR859594">
    <property type="protein sequence ID" value="CAH91757.1"/>
    <property type="molecule type" value="mRNA"/>
</dbReference>
<dbReference type="RefSeq" id="NP_001126020.1">
    <property type="nucleotide sequence ID" value="NM_001132548.2"/>
</dbReference>
<dbReference type="SMR" id="Q5R903"/>
<dbReference type="STRING" id="9601.ENSPPYP00000018828"/>
<dbReference type="GeneID" id="100172967"/>
<dbReference type="KEGG" id="pon:100172967"/>
<dbReference type="CTD" id="57231"/>
<dbReference type="eggNOG" id="KOG2101">
    <property type="taxonomic scope" value="Eukaryota"/>
</dbReference>
<dbReference type="InParanoid" id="Q5R903"/>
<dbReference type="OrthoDB" id="5957963at2759"/>
<dbReference type="Proteomes" id="UP000001595">
    <property type="component" value="Unplaced"/>
</dbReference>
<dbReference type="GO" id="GO:0030425">
    <property type="term" value="C:dendrite"/>
    <property type="evidence" value="ECO:0007669"/>
    <property type="project" value="UniProtKB-SubCell"/>
</dbReference>
<dbReference type="GO" id="GO:0005770">
    <property type="term" value="C:late endosome"/>
    <property type="evidence" value="ECO:0007669"/>
    <property type="project" value="TreeGrafter"/>
</dbReference>
<dbReference type="GO" id="GO:0080025">
    <property type="term" value="F:phosphatidylinositol-3,5-bisphosphate binding"/>
    <property type="evidence" value="ECO:0007669"/>
    <property type="project" value="InterPro"/>
</dbReference>
<dbReference type="GO" id="GO:0097352">
    <property type="term" value="P:autophagosome maturation"/>
    <property type="evidence" value="ECO:0007669"/>
    <property type="project" value="TreeGrafter"/>
</dbReference>
<dbReference type="GO" id="GO:0015031">
    <property type="term" value="P:protein transport"/>
    <property type="evidence" value="ECO:0007669"/>
    <property type="project" value="UniProtKB-KW"/>
</dbReference>
<dbReference type="CDD" id="cd06877">
    <property type="entry name" value="PX_SNX14"/>
    <property type="match status" value="1"/>
</dbReference>
<dbReference type="CDD" id="cd08722">
    <property type="entry name" value="RGS_SNX14"/>
    <property type="match status" value="1"/>
</dbReference>
<dbReference type="FunFam" id="1.10.167.10:FF:000004">
    <property type="entry name" value="sorting nexin-14 isoform X1"/>
    <property type="match status" value="1"/>
</dbReference>
<dbReference type="FunFam" id="3.30.1520.10:FF:000007">
    <property type="entry name" value="sorting nexin-14 isoform X1"/>
    <property type="match status" value="1"/>
</dbReference>
<dbReference type="Gene3D" id="3.30.1520.10">
    <property type="entry name" value="Phox-like domain"/>
    <property type="match status" value="1"/>
</dbReference>
<dbReference type="Gene3D" id="1.10.167.10">
    <property type="entry name" value="Regulator of G-protein Signalling 4, domain 2"/>
    <property type="match status" value="1"/>
</dbReference>
<dbReference type="InterPro" id="IPR003114">
    <property type="entry name" value="Phox_assoc"/>
</dbReference>
<dbReference type="InterPro" id="IPR001683">
    <property type="entry name" value="PX_dom"/>
</dbReference>
<dbReference type="InterPro" id="IPR036871">
    <property type="entry name" value="PX_dom_sf"/>
</dbReference>
<dbReference type="InterPro" id="IPR016137">
    <property type="entry name" value="RGS"/>
</dbReference>
<dbReference type="InterPro" id="IPR036305">
    <property type="entry name" value="RGS_sf"/>
</dbReference>
<dbReference type="InterPro" id="IPR044926">
    <property type="entry name" value="RGS_subdomain_2"/>
</dbReference>
<dbReference type="InterPro" id="IPR037436">
    <property type="entry name" value="SNX14_PX"/>
</dbReference>
<dbReference type="InterPro" id="IPR037892">
    <property type="entry name" value="SNX14_RGS"/>
</dbReference>
<dbReference type="InterPro" id="IPR013937">
    <property type="entry name" value="Sorting_nexin_C"/>
</dbReference>
<dbReference type="PANTHER" id="PTHR22775">
    <property type="entry name" value="SORTING NEXIN"/>
    <property type="match status" value="1"/>
</dbReference>
<dbReference type="PANTHER" id="PTHR22775:SF44">
    <property type="entry name" value="SORTING NEXIN-14"/>
    <property type="match status" value="1"/>
</dbReference>
<dbReference type="Pfam" id="PF08628">
    <property type="entry name" value="Nexin_C"/>
    <property type="match status" value="1"/>
</dbReference>
<dbReference type="Pfam" id="PF00787">
    <property type="entry name" value="PX"/>
    <property type="match status" value="1"/>
</dbReference>
<dbReference type="Pfam" id="PF02194">
    <property type="entry name" value="PXA"/>
    <property type="match status" value="1"/>
</dbReference>
<dbReference type="Pfam" id="PF00615">
    <property type="entry name" value="RGS"/>
    <property type="match status" value="1"/>
</dbReference>
<dbReference type="SMART" id="SM00312">
    <property type="entry name" value="PX"/>
    <property type="match status" value="1"/>
</dbReference>
<dbReference type="SMART" id="SM00313">
    <property type="entry name" value="PXA"/>
    <property type="match status" value="1"/>
</dbReference>
<dbReference type="SMART" id="SM00315">
    <property type="entry name" value="RGS"/>
    <property type="match status" value="1"/>
</dbReference>
<dbReference type="SUPFAM" id="SSF64268">
    <property type="entry name" value="PX domain"/>
    <property type="match status" value="1"/>
</dbReference>
<dbReference type="SUPFAM" id="SSF48097">
    <property type="entry name" value="Regulator of G-protein signaling, RGS"/>
    <property type="match status" value="1"/>
</dbReference>
<dbReference type="PROSITE" id="PS50195">
    <property type="entry name" value="PX"/>
    <property type="match status" value="1"/>
</dbReference>
<dbReference type="PROSITE" id="PS51207">
    <property type="entry name" value="PXA"/>
    <property type="match status" value="1"/>
</dbReference>
<dbReference type="PROSITE" id="PS50132">
    <property type="entry name" value="RGS"/>
    <property type="match status" value="1"/>
</dbReference>
<accession>Q5R903</accession>
<gene>
    <name type="primary">SNX14</name>
</gene>
<proteinExistence type="evidence at transcript level"/>
<protein>
    <recommendedName>
        <fullName>Sorting nexin-14</fullName>
    </recommendedName>
</protein>
<comment type="function">
    <text evidence="1 2">Plays a role in maintaining normal neuronal excitability and synaptic transmission. May be involved in several stages of intracellular trafficking.</text>
</comment>
<comment type="subcellular location">
    <subcellularLocation>
        <location evidence="2">Cytoplasm</location>
    </subcellularLocation>
    <subcellularLocation>
        <location evidence="2">Cell projection</location>
        <location evidence="2">Dendrite</location>
    </subcellularLocation>
</comment>
<comment type="similarity">
    <text evidence="7">Belongs to the sorting nexin family.</text>
</comment>
<reference key="1">
    <citation type="submission" date="2004-11" db="EMBL/GenBank/DDBJ databases">
        <authorList>
            <consortium name="The German cDNA consortium"/>
        </authorList>
    </citation>
    <scope>NUCLEOTIDE SEQUENCE [LARGE SCALE MRNA]</scope>
    <source>
        <tissue>Heart</tissue>
    </source>
</reference>
<keyword id="KW-0966">Cell projection</keyword>
<keyword id="KW-0963">Cytoplasm</keyword>
<keyword id="KW-0597">Phosphoprotein</keyword>
<keyword id="KW-0653">Protein transport</keyword>
<keyword id="KW-1185">Reference proteome</keyword>
<keyword id="KW-0813">Transport</keyword>
<organism>
    <name type="scientific">Pongo abelii</name>
    <name type="common">Sumatran orangutan</name>
    <name type="synonym">Pongo pygmaeus abelii</name>
    <dbReference type="NCBI Taxonomy" id="9601"/>
    <lineage>
        <taxon>Eukaryota</taxon>
        <taxon>Metazoa</taxon>
        <taxon>Chordata</taxon>
        <taxon>Craniata</taxon>
        <taxon>Vertebrata</taxon>
        <taxon>Euteleostomi</taxon>
        <taxon>Mammalia</taxon>
        <taxon>Eutheria</taxon>
        <taxon>Euarchontoglires</taxon>
        <taxon>Primates</taxon>
        <taxon>Haplorrhini</taxon>
        <taxon>Catarrhini</taxon>
        <taxon>Hominidae</taxon>
        <taxon>Pongo</taxon>
    </lineage>
</organism>
<sequence length="894" mass="104039">MIFWSFVAGVVTFYCSLGPDSLLPNIFFTIKYKPKQLGLQELFPQGHSCAVCGKVKCKRHRPSLLLENYQPWLDLKISSKVDASLSEVLELVLENFVYPWYRDVTDDESFVDELRITLRFFASVLIRRIHKVDIPSIITKKLLKAAMKHIEVIVKARQKVKNTEFLQQAALEEYGPELHVALRSRRDELHYLRKLTELLFPYILPPKATDCRSLTLLIREILSGSVFLPSLDFLADPDTVNHLLIIFIDDSPPEKATEPASPLVPFLQKFAEPRNKKPSVLKLELKQIREQQDLLFRFMNFLKQEGAVHVLQFCLTVEEFNDRILRPELSNDEMLSLHEELQKIYKTYCLDESIDKIRFDPFIVEEIQRIAEGPYIDVVKLQTMRCLFEAYEHVLSLLENVFTPMFCHSDEYFRQLLRGAESPTRNSKLNRGSLSLDDFRNTQKRGESFGISRIGSKIKGVFKSTTMEGAMLPNYGVAEGEDDFIEEGIVVMEDDSPVEAVSTPNTPRNLAAWKISIPYVDFFEDPSSERKEKKERIPVFCIDVERNDRRAVGHEPEHWSVYRRYLEFYVLESKLTEFHGTFPDAQLPSKRIIGPKNYEFLKSKREEFQEYLQKLLQHPELSNSQLLADFLSPNGGETQFLDKILPDVNLGKIIKSVPGKLMKEKGQHLEPFIMNFINSCESPKPKPSRPELTILSPTSENNKKLFNDLFKNNANRAENTERKQNQNYFMEVMTVEGVYDYLMYVGRVVFQVPDWLHHLLMGTRILFKNTLEMYTDYYLQCKLEQLFQEHRLVSLITLLRDAIFCENTEPRSLQDKQKGAKQTFEEMMNYIPDLLVKCIGEETKYESIRLLFDGLQQPVLNKQLTYVLLDIVIQELFPELNKVQKEVTSVTSWM</sequence>
<evidence type="ECO:0000250" key="1"/>
<evidence type="ECO:0000250" key="2">
    <source>
        <dbReference type="UniProtKB" id="Q8BHY8"/>
    </source>
</evidence>
<evidence type="ECO:0000250" key="3">
    <source>
        <dbReference type="UniProtKB" id="Q9Y5W7"/>
    </source>
</evidence>
<evidence type="ECO:0000255" key="4">
    <source>
        <dbReference type="PROSITE-ProRule" id="PRU00147"/>
    </source>
</evidence>
<evidence type="ECO:0000255" key="5">
    <source>
        <dbReference type="PROSITE-ProRule" id="PRU00171"/>
    </source>
</evidence>
<evidence type="ECO:0000255" key="6">
    <source>
        <dbReference type="PROSITE-ProRule" id="PRU00553"/>
    </source>
</evidence>
<evidence type="ECO:0000305" key="7"/>
<name>SNX14_PONAB</name>